<accession>A7NR53</accession>
<comment type="function">
    <text evidence="1">Binds to 23S rRNA. Forms part of two intersubunit bridges in the 70S ribosome.</text>
</comment>
<comment type="subunit">
    <text evidence="1">Part of the 50S ribosomal subunit. Forms a cluster with proteins L3 and L19. In the 70S ribosome, L14 and L19 interact and together make contacts with the 16S rRNA in bridges B5 and B8.</text>
</comment>
<comment type="similarity">
    <text evidence="1">Belongs to the universal ribosomal protein uL14 family.</text>
</comment>
<reference key="1">
    <citation type="submission" date="2007-08" db="EMBL/GenBank/DDBJ databases">
        <title>Complete sequence of Roseiflexus castenholzii DSM 13941.</title>
        <authorList>
            <consortium name="US DOE Joint Genome Institute"/>
            <person name="Copeland A."/>
            <person name="Lucas S."/>
            <person name="Lapidus A."/>
            <person name="Barry K."/>
            <person name="Glavina del Rio T."/>
            <person name="Dalin E."/>
            <person name="Tice H."/>
            <person name="Pitluck S."/>
            <person name="Thompson L.S."/>
            <person name="Brettin T."/>
            <person name="Bruce D."/>
            <person name="Detter J.C."/>
            <person name="Han C."/>
            <person name="Tapia R."/>
            <person name="Schmutz J."/>
            <person name="Larimer F."/>
            <person name="Land M."/>
            <person name="Hauser L."/>
            <person name="Kyrpides N."/>
            <person name="Mikhailova N."/>
            <person name="Bryant D.A."/>
            <person name="Hanada S."/>
            <person name="Tsukatani Y."/>
            <person name="Richardson P."/>
        </authorList>
    </citation>
    <scope>NUCLEOTIDE SEQUENCE [LARGE SCALE GENOMIC DNA]</scope>
    <source>
        <strain>DSM 13941 / HLO8</strain>
    </source>
</reference>
<name>RL14_ROSCS</name>
<sequence>MVQQETRLRVADNTGAKEILCIRVLGGSHVRYGRVGDVIVASVKEATPGGAVKKGEVVRAVIVRTAKEYGRPDGSHIRFDDNAAVIIGKDNNPRGTRIFGPVARELRERAFMKIISLAPEVL</sequence>
<proteinExistence type="inferred from homology"/>
<dbReference type="EMBL" id="CP000804">
    <property type="protein sequence ID" value="ABU60049.1"/>
    <property type="molecule type" value="Genomic_DNA"/>
</dbReference>
<dbReference type="RefSeq" id="WP_012122471.1">
    <property type="nucleotide sequence ID" value="NC_009767.1"/>
</dbReference>
<dbReference type="SMR" id="A7NR53"/>
<dbReference type="STRING" id="383372.Rcas_4016"/>
<dbReference type="KEGG" id="rca:Rcas_4016"/>
<dbReference type="eggNOG" id="COG0093">
    <property type="taxonomic scope" value="Bacteria"/>
</dbReference>
<dbReference type="HOGENOM" id="CLU_095071_2_1_0"/>
<dbReference type="OrthoDB" id="9806379at2"/>
<dbReference type="Proteomes" id="UP000000263">
    <property type="component" value="Chromosome"/>
</dbReference>
<dbReference type="GO" id="GO:0022625">
    <property type="term" value="C:cytosolic large ribosomal subunit"/>
    <property type="evidence" value="ECO:0007669"/>
    <property type="project" value="TreeGrafter"/>
</dbReference>
<dbReference type="GO" id="GO:0070180">
    <property type="term" value="F:large ribosomal subunit rRNA binding"/>
    <property type="evidence" value="ECO:0007669"/>
    <property type="project" value="TreeGrafter"/>
</dbReference>
<dbReference type="GO" id="GO:0003735">
    <property type="term" value="F:structural constituent of ribosome"/>
    <property type="evidence" value="ECO:0007669"/>
    <property type="project" value="InterPro"/>
</dbReference>
<dbReference type="GO" id="GO:0006412">
    <property type="term" value="P:translation"/>
    <property type="evidence" value="ECO:0007669"/>
    <property type="project" value="UniProtKB-UniRule"/>
</dbReference>
<dbReference type="CDD" id="cd00337">
    <property type="entry name" value="Ribosomal_uL14"/>
    <property type="match status" value="1"/>
</dbReference>
<dbReference type="FunFam" id="2.40.150.20:FF:000001">
    <property type="entry name" value="50S ribosomal protein L14"/>
    <property type="match status" value="1"/>
</dbReference>
<dbReference type="Gene3D" id="2.40.150.20">
    <property type="entry name" value="Ribosomal protein L14"/>
    <property type="match status" value="1"/>
</dbReference>
<dbReference type="HAMAP" id="MF_01367">
    <property type="entry name" value="Ribosomal_uL14"/>
    <property type="match status" value="1"/>
</dbReference>
<dbReference type="InterPro" id="IPR000218">
    <property type="entry name" value="Ribosomal_uL14"/>
</dbReference>
<dbReference type="InterPro" id="IPR005745">
    <property type="entry name" value="Ribosomal_uL14_bac-type"/>
</dbReference>
<dbReference type="InterPro" id="IPR019972">
    <property type="entry name" value="Ribosomal_uL14_CS"/>
</dbReference>
<dbReference type="InterPro" id="IPR036853">
    <property type="entry name" value="Ribosomal_uL14_sf"/>
</dbReference>
<dbReference type="NCBIfam" id="TIGR01067">
    <property type="entry name" value="rplN_bact"/>
    <property type="match status" value="1"/>
</dbReference>
<dbReference type="PANTHER" id="PTHR11761">
    <property type="entry name" value="50S/60S RIBOSOMAL PROTEIN L14/L23"/>
    <property type="match status" value="1"/>
</dbReference>
<dbReference type="PANTHER" id="PTHR11761:SF3">
    <property type="entry name" value="LARGE RIBOSOMAL SUBUNIT PROTEIN UL14M"/>
    <property type="match status" value="1"/>
</dbReference>
<dbReference type="Pfam" id="PF00238">
    <property type="entry name" value="Ribosomal_L14"/>
    <property type="match status" value="1"/>
</dbReference>
<dbReference type="SMART" id="SM01374">
    <property type="entry name" value="Ribosomal_L14"/>
    <property type="match status" value="1"/>
</dbReference>
<dbReference type="SUPFAM" id="SSF50193">
    <property type="entry name" value="Ribosomal protein L14"/>
    <property type="match status" value="1"/>
</dbReference>
<dbReference type="PROSITE" id="PS00049">
    <property type="entry name" value="RIBOSOMAL_L14"/>
    <property type="match status" value="1"/>
</dbReference>
<protein>
    <recommendedName>
        <fullName evidence="1">Large ribosomal subunit protein uL14</fullName>
    </recommendedName>
    <alternativeName>
        <fullName evidence="2">50S ribosomal protein L14</fullName>
    </alternativeName>
</protein>
<evidence type="ECO:0000255" key="1">
    <source>
        <dbReference type="HAMAP-Rule" id="MF_01367"/>
    </source>
</evidence>
<evidence type="ECO:0000305" key="2"/>
<organism>
    <name type="scientific">Roseiflexus castenholzii (strain DSM 13941 / HLO8)</name>
    <dbReference type="NCBI Taxonomy" id="383372"/>
    <lineage>
        <taxon>Bacteria</taxon>
        <taxon>Bacillati</taxon>
        <taxon>Chloroflexota</taxon>
        <taxon>Chloroflexia</taxon>
        <taxon>Chloroflexales</taxon>
        <taxon>Roseiflexineae</taxon>
        <taxon>Roseiflexaceae</taxon>
        <taxon>Roseiflexus</taxon>
    </lineage>
</organism>
<gene>
    <name evidence="1" type="primary">rplN</name>
    <name type="ordered locus">Rcas_4016</name>
</gene>
<feature type="chain" id="PRO_1000087142" description="Large ribosomal subunit protein uL14">
    <location>
        <begin position="1"/>
        <end position="122"/>
    </location>
</feature>
<keyword id="KW-1185">Reference proteome</keyword>
<keyword id="KW-0687">Ribonucleoprotein</keyword>
<keyword id="KW-0689">Ribosomal protein</keyword>
<keyword id="KW-0694">RNA-binding</keyword>
<keyword id="KW-0699">rRNA-binding</keyword>